<feature type="chain" id="PRO_1000085358" description="Replication initiation control protein YabA">
    <location>
        <begin position="1"/>
        <end position="115"/>
    </location>
</feature>
<feature type="binding site" evidence="1">
    <location>
        <position position="90"/>
    </location>
    <ligand>
        <name>Zn(2+)</name>
        <dbReference type="ChEBI" id="CHEBI:29105"/>
    </ligand>
</feature>
<feature type="binding site" evidence="1">
    <location>
        <position position="92"/>
    </location>
    <ligand>
        <name>Zn(2+)</name>
        <dbReference type="ChEBI" id="CHEBI:29105"/>
    </ligand>
</feature>
<feature type="binding site" evidence="1">
    <location>
        <position position="106"/>
    </location>
    <ligand>
        <name>Zn(2+)</name>
        <dbReference type="ChEBI" id="CHEBI:29105"/>
    </ligand>
</feature>
<feature type="binding site" evidence="1">
    <location>
        <position position="109"/>
    </location>
    <ligand>
        <name>Zn(2+)</name>
        <dbReference type="ChEBI" id="CHEBI:29105"/>
    </ligand>
</feature>
<reference key="1">
    <citation type="submission" date="2007-05" db="EMBL/GenBank/DDBJ databases">
        <title>Complete sequence of chromosome of Staphylococcus aureus subsp. aureus JH9.</title>
        <authorList>
            <consortium name="US DOE Joint Genome Institute"/>
            <person name="Copeland A."/>
            <person name="Lucas S."/>
            <person name="Lapidus A."/>
            <person name="Barry K."/>
            <person name="Detter J.C."/>
            <person name="Glavina del Rio T."/>
            <person name="Hammon N."/>
            <person name="Israni S."/>
            <person name="Pitluck S."/>
            <person name="Chain P."/>
            <person name="Malfatti S."/>
            <person name="Shin M."/>
            <person name="Vergez L."/>
            <person name="Schmutz J."/>
            <person name="Larimer F."/>
            <person name="Land M."/>
            <person name="Hauser L."/>
            <person name="Kyrpides N."/>
            <person name="Kim E."/>
            <person name="Tomasz A."/>
            <person name="Richardson P."/>
        </authorList>
    </citation>
    <scope>NUCLEOTIDE SEQUENCE [LARGE SCALE GENOMIC DNA]</scope>
    <source>
        <strain>JH9</strain>
    </source>
</reference>
<sequence>MDRNEIFEKIMRLEMNVNQLSKETSELKAHAVELVEENVALQLENDNLKKVLGNDEPTTIDTANSKPAKAVKKPLPSKDNLAILYGEGFHICKGELFGKHRHGEDCLFCLEVLSD</sequence>
<gene>
    <name evidence="1" type="primary">yabA</name>
    <name type="ordered locus">SaurJH9_0507</name>
</gene>
<proteinExistence type="inferred from homology"/>
<keyword id="KW-0963">Cytoplasm</keyword>
<keyword id="KW-0235">DNA replication</keyword>
<keyword id="KW-0236">DNA replication inhibitor</keyword>
<keyword id="KW-0479">Metal-binding</keyword>
<keyword id="KW-0862">Zinc</keyword>
<comment type="function">
    <text evidence="1">Involved in control of chromosome replication initiation. Inhibits the cooperative binding of DnaA to the oriC region, thus negatively regulating initiation of chromosome replication. Inhibits the ability of DnaA-ATP to form a helix on DNA; does not disassemble preformed DnaA-DNA helices. Decreases the residence time of DnaA on the chromosome at its binding sites (oriC, replication forks and promoter-binding sites). Tethers DnaA to the replication machinery via the DNA polymerase beta sliding clamp subunit (dnaN). Associates with oriC and other DnaA targets on the chromosome in a DnaA-dependent manner.</text>
</comment>
<comment type="cofactor">
    <cofactor evidence="1">
        <name>Zn(2+)</name>
        <dbReference type="ChEBI" id="CHEBI:29105"/>
    </cofactor>
    <text evidence="1">Binds 1 zinc ion per subunit.</text>
</comment>
<comment type="subunit">
    <text evidence="1">Homotetramer. Interacts with both DnaA and DnaN, acting as a bridge between these two proteins.</text>
</comment>
<comment type="subcellular location">
    <subcellularLocation>
        <location evidence="1">Cytoplasm</location>
        <location evidence="1">Nucleoid</location>
    </subcellularLocation>
    <text evidence="1">Localizes in tight foci, which correspond to the replisome at mid-cell throughout the cell cycle.</text>
</comment>
<comment type="similarity">
    <text evidence="1">Belongs to the YabA family.</text>
</comment>
<organism>
    <name type="scientific">Staphylococcus aureus (strain JH9)</name>
    <dbReference type="NCBI Taxonomy" id="359786"/>
    <lineage>
        <taxon>Bacteria</taxon>
        <taxon>Bacillati</taxon>
        <taxon>Bacillota</taxon>
        <taxon>Bacilli</taxon>
        <taxon>Bacillales</taxon>
        <taxon>Staphylococcaceae</taxon>
        <taxon>Staphylococcus</taxon>
    </lineage>
</organism>
<protein>
    <recommendedName>
        <fullName evidence="1">Replication initiation control protein YabA</fullName>
    </recommendedName>
</protein>
<evidence type="ECO:0000255" key="1">
    <source>
        <dbReference type="HAMAP-Rule" id="MF_01159"/>
    </source>
</evidence>
<name>YABA_STAA9</name>
<accession>A5IQ38</accession>
<dbReference type="EMBL" id="CP000703">
    <property type="protein sequence ID" value="ABQ48311.1"/>
    <property type="molecule type" value="Genomic_DNA"/>
</dbReference>
<dbReference type="RefSeq" id="WP_000375683.1">
    <property type="nucleotide sequence ID" value="NC_009487.1"/>
</dbReference>
<dbReference type="SMR" id="A5IQ38"/>
<dbReference type="KEGG" id="saj:SaurJH9_0507"/>
<dbReference type="HOGENOM" id="CLU_157169_1_0_9"/>
<dbReference type="GO" id="GO:0009295">
    <property type="term" value="C:nucleoid"/>
    <property type="evidence" value="ECO:0007669"/>
    <property type="project" value="UniProtKB-SubCell"/>
</dbReference>
<dbReference type="GO" id="GO:0006260">
    <property type="term" value="P:DNA replication"/>
    <property type="evidence" value="ECO:0007669"/>
    <property type="project" value="UniProtKB-UniRule"/>
</dbReference>
<dbReference type="HAMAP" id="MF_01159">
    <property type="entry name" value="YabA"/>
    <property type="match status" value="1"/>
</dbReference>
<dbReference type="InterPro" id="IPR010377">
    <property type="entry name" value="YabA"/>
</dbReference>
<dbReference type="NCBIfam" id="NF009641">
    <property type="entry name" value="PRK13169.1-2"/>
    <property type="match status" value="1"/>
</dbReference>
<dbReference type="Pfam" id="PF06156">
    <property type="entry name" value="YabA"/>
    <property type="match status" value="1"/>
</dbReference>
<dbReference type="PIRSF" id="PIRSF021439">
    <property type="entry name" value="DUF972"/>
    <property type="match status" value="1"/>
</dbReference>